<accession>A1A068</accession>
<organism>
    <name type="scientific">Bifidobacterium adolescentis (strain ATCC 15703 / DSM 20083 / NCTC 11814 / E194a)</name>
    <dbReference type="NCBI Taxonomy" id="367928"/>
    <lineage>
        <taxon>Bacteria</taxon>
        <taxon>Bacillati</taxon>
        <taxon>Actinomycetota</taxon>
        <taxon>Actinomycetes</taxon>
        <taxon>Bifidobacteriales</taxon>
        <taxon>Bifidobacteriaceae</taxon>
        <taxon>Bifidobacterium</taxon>
    </lineage>
</organism>
<protein>
    <recommendedName>
        <fullName evidence="1">Small ribosomal subunit protein uS10</fullName>
    </recommendedName>
    <alternativeName>
        <fullName evidence="2">30S ribosomal protein S10</fullName>
    </alternativeName>
</protein>
<dbReference type="EMBL" id="AP009256">
    <property type="protein sequence ID" value="BAF39101.1"/>
    <property type="molecule type" value="Genomic_DNA"/>
</dbReference>
<dbReference type="RefSeq" id="WP_011742824.1">
    <property type="nucleotide sequence ID" value="NC_008618.1"/>
</dbReference>
<dbReference type="SMR" id="A1A068"/>
<dbReference type="STRING" id="367928.BAD_0320"/>
<dbReference type="PaxDb" id="1680-BADO_0327"/>
<dbReference type="GeneID" id="4556656"/>
<dbReference type="KEGG" id="bad:BAD_0320"/>
<dbReference type="HOGENOM" id="CLU_122625_1_3_11"/>
<dbReference type="Proteomes" id="UP000008702">
    <property type="component" value="Chromosome"/>
</dbReference>
<dbReference type="GO" id="GO:1990904">
    <property type="term" value="C:ribonucleoprotein complex"/>
    <property type="evidence" value="ECO:0007669"/>
    <property type="project" value="UniProtKB-KW"/>
</dbReference>
<dbReference type="GO" id="GO:0005840">
    <property type="term" value="C:ribosome"/>
    <property type="evidence" value="ECO:0007669"/>
    <property type="project" value="UniProtKB-KW"/>
</dbReference>
<dbReference type="GO" id="GO:0003735">
    <property type="term" value="F:structural constituent of ribosome"/>
    <property type="evidence" value="ECO:0007669"/>
    <property type="project" value="InterPro"/>
</dbReference>
<dbReference type="GO" id="GO:0000049">
    <property type="term" value="F:tRNA binding"/>
    <property type="evidence" value="ECO:0007669"/>
    <property type="project" value="UniProtKB-UniRule"/>
</dbReference>
<dbReference type="GO" id="GO:0006412">
    <property type="term" value="P:translation"/>
    <property type="evidence" value="ECO:0007669"/>
    <property type="project" value="UniProtKB-UniRule"/>
</dbReference>
<dbReference type="FunFam" id="3.30.70.600:FF:000001">
    <property type="entry name" value="30S ribosomal protein S10"/>
    <property type="match status" value="1"/>
</dbReference>
<dbReference type="Gene3D" id="3.30.70.600">
    <property type="entry name" value="Ribosomal protein S10 domain"/>
    <property type="match status" value="1"/>
</dbReference>
<dbReference type="HAMAP" id="MF_00508">
    <property type="entry name" value="Ribosomal_uS10"/>
    <property type="match status" value="1"/>
</dbReference>
<dbReference type="InterPro" id="IPR001848">
    <property type="entry name" value="Ribosomal_uS10"/>
</dbReference>
<dbReference type="InterPro" id="IPR018268">
    <property type="entry name" value="Ribosomal_uS10_CS"/>
</dbReference>
<dbReference type="InterPro" id="IPR027486">
    <property type="entry name" value="Ribosomal_uS10_dom"/>
</dbReference>
<dbReference type="InterPro" id="IPR036838">
    <property type="entry name" value="Ribosomal_uS10_dom_sf"/>
</dbReference>
<dbReference type="NCBIfam" id="NF001861">
    <property type="entry name" value="PRK00596.1"/>
    <property type="match status" value="1"/>
</dbReference>
<dbReference type="NCBIfam" id="TIGR01049">
    <property type="entry name" value="rpsJ_bact"/>
    <property type="match status" value="1"/>
</dbReference>
<dbReference type="PANTHER" id="PTHR11700">
    <property type="entry name" value="30S RIBOSOMAL PROTEIN S10 FAMILY MEMBER"/>
    <property type="match status" value="1"/>
</dbReference>
<dbReference type="Pfam" id="PF00338">
    <property type="entry name" value="Ribosomal_S10"/>
    <property type="match status" value="1"/>
</dbReference>
<dbReference type="PRINTS" id="PR00971">
    <property type="entry name" value="RIBOSOMALS10"/>
</dbReference>
<dbReference type="SMART" id="SM01403">
    <property type="entry name" value="Ribosomal_S10"/>
    <property type="match status" value="1"/>
</dbReference>
<dbReference type="SUPFAM" id="SSF54999">
    <property type="entry name" value="Ribosomal protein S10"/>
    <property type="match status" value="1"/>
</dbReference>
<dbReference type="PROSITE" id="PS00361">
    <property type="entry name" value="RIBOSOMAL_S10"/>
    <property type="match status" value="1"/>
</dbReference>
<name>RS10_BIFAA</name>
<sequence>MAGQKIRIRLKSYDHEVIDQSAKKIVETVTNAGATVVGPVPLPTEKNVLVVIRSPHKYKDSREHFEMRTHKRLIDIVDPTPKAVDSLMHIDLPADVNIEIKL</sequence>
<evidence type="ECO:0000255" key="1">
    <source>
        <dbReference type="HAMAP-Rule" id="MF_00508"/>
    </source>
</evidence>
<evidence type="ECO:0000305" key="2"/>
<feature type="chain" id="PRO_1000014989" description="Small ribosomal subunit protein uS10">
    <location>
        <begin position="1"/>
        <end position="102"/>
    </location>
</feature>
<proteinExistence type="inferred from homology"/>
<gene>
    <name evidence="1" type="primary">rpsJ</name>
    <name type="ordered locus">BAD_0320</name>
</gene>
<reference key="1">
    <citation type="submission" date="2006-12" db="EMBL/GenBank/DDBJ databases">
        <title>Bifidobacterium adolescentis complete genome sequence.</title>
        <authorList>
            <person name="Suzuki T."/>
            <person name="Tsuda Y."/>
            <person name="Kanou N."/>
            <person name="Inoue T."/>
            <person name="Kumazaki K."/>
            <person name="Nagano S."/>
            <person name="Hirai S."/>
            <person name="Tanaka K."/>
            <person name="Watanabe K."/>
        </authorList>
    </citation>
    <scope>NUCLEOTIDE SEQUENCE [LARGE SCALE GENOMIC DNA]</scope>
    <source>
        <strain>ATCC 15703 / DSM 20083 / NCTC 11814 / E194a</strain>
    </source>
</reference>
<comment type="function">
    <text evidence="1">Involved in the binding of tRNA to the ribosomes.</text>
</comment>
<comment type="subunit">
    <text evidence="1">Part of the 30S ribosomal subunit.</text>
</comment>
<comment type="similarity">
    <text evidence="1">Belongs to the universal ribosomal protein uS10 family.</text>
</comment>
<keyword id="KW-1185">Reference proteome</keyword>
<keyword id="KW-0687">Ribonucleoprotein</keyword>
<keyword id="KW-0689">Ribosomal protein</keyword>